<comment type="function">
    <text>Plays a critical role in virus induced T-cell transformation. Binds to T-cell-specific tyrosine kinase LCK SH2 and SH3 domains, thereby activating its kinase activity. Once phosphorylated by host LCK, forms a complex with at least STAT 1 and 3, resulting on the phosphorylation of STAT3 and presumably STAT1, and their migration into the nucleus to induce transcription of target genes. Stimulates host ILF3/NF-AT-90 activity. Association with host NXF1/TAP transduces the signal up-regulating surface expression of adhesion molecules as well as activating NF-kappa-B activity. Acts synergistically with StpC to stimulate NF-kappa-B activity and interleukin-2 gene expression. Activation of NF-kappa-B protects lymphocytes from apoptosis, thereby facilitating viral induced cell transformation. May cause down-regulation of host LCK and cell apoptosis when stably overexpressed ex vivo. Interaction with WDR48 induce degradation of T-cell receptor in a lysosome-dependent fashion, when both proteins are overexpressed. The biological effect of this interaction remains controversial since no T-cell receptor degradation is observed in infected cells.</text>
</comment>
<comment type="subunit">
    <text>Binds host LCK, human WDR48 and human NXF1/TAP. Forms a complex with activated LCK and STAT1 and STAT3.</text>
</comment>
<comment type="interaction">
    <interactant intactId="EBI-866709">
        <id>P22575</id>
    </interactant>
    <interactant intactId="EBI-1348">
        <id>P06239</id>
        <label>LCK</label>
    </interactant>
    <organismsDiffer>true</organismsDiffer>
    <experiments>7</experiments>
</comment>
<comment type="interaction">
    <interactant intactId="EBI-866709">
        <id>P22575</id>
    </interactant>
    <interactant intactId="EBI-79452">
        <id>P07948</id>
        <label>LYN</label>
    </interactant>
    <organismsDiffer>true</organismsDiffer>
    <experiments>3</experiments>
</comment>
<comment type="interaction">
    <interactant intactId="EBI-866709">
        <id>P22575</id>
    </interactant>
    <interactant intactId="EBI-398874">
        <id>Q9UBU9</id>
        <label>NXF1</label>
    </interactant>
    <organismsDiffer>true</organismsDiffer>
    <experiments>6</experiments>
</comment>
<comment type="subcellular location">
    <subcellularLocation>
        <location evidence="1">Host cell membrane</location>
        <topology evidence="1">Single-pass membrane protein</topology>
    </subcellularLocation>
</comment>
<comment type="domain">
    <text>The SH3B/LBD1 (SH3-binding) region binds LCK SH3 domain and CSKH (C-terminal Src-related kinase homology) region binds the kinase domains of LCK. Both motif are required to activate LCK.</text>
</comment>
<comment type="PTM">
    <text evidence="1">Phosphorylation on Tyr-114 acts as a docking site for the recruitment of STATs 1 and 3.</text>
</comment>
<comment type="biotechnology">
    <text>Used in cell biology research to transform T-cell lymphocytes. Saimiriine herpesvirus 2 transforms T-cell lymphocytes, including human, to continuous growth in vitro. 2 viral proteins, Tip and StpC, are essential for this function.</text>
</comment>
<comment type="miscellaneous">
    <text>In its host, LCK protein is inactivated, preventing T-cell transformation activity.</text>
</comment>
<feature type="chain" id="PRO_0000116192" description="Tyrosine-protein kinase-interacting protein">
    <location>
        <begin position="1"/>
        <end position="256"/>
    </location>
</feature>
<feature type="topological domain" description="Cytoplasmic" evidence="2">
    <location>
        <begin position="1"/>
        <end position="228"/>
    </location>
</feature>
<feature type="transmembrane region" description="Helical" evidence="2">
    <location>
        <begin position="229"/>
        <end position="249"/>
    </location>
</feature>
<feature type="topological domain" description="Extracellular" evidence="2">
    <location>
        <begin position="250"/>
        <end position="256"/>
    </location>
</feature>
<feature type="region of interest" description="Disordered" evidence="3">
    <location>
        <begin position="1"/>
        <end position="49"/>
    </location>
</feature>
<feature type="region of interest" description="CSKH/LBD2">
    <location>
        <begin position="146"/>
        <end position="155"/>
    </location>
</feature>
<feature type="region of interest" description="Disordered" evidence="3">
    <location>
        <begin position="162"/>
        <end position="183"/>
    </location>
</feature>
<feature type="region of interest" description="SH3B/LBD1">
    <location>
        <begin position="174"/>
        <end position="183"/>
    </location>
</feature>
<feature type="compositionally biased region" description="Acidic residues" evidence="3">
    <location>
        <begin position="1"/>
        <end position="14"/>
    </location>
</feature>
<feature type="compositionally biased region" description="Basic and acidic residues" evidence="3">
    <location>
        <begin position="15"/>
        <end position="26"/>
    </location>
</feature>
<feature type="compositionally biased region" description="Low complexity" evidence="3">
    <location>
        <begin position="27"/>
        <end position="42"/>
    </location>
</feature>
<feature type="compositionally biased region" description="Pro residues" evidence="3">
    <location>
        <begin position="174"/>
        <end position="183"/>
    </location>
</feature>
<feature type="modified residue" description="Phosphotyrosine; by host LCK" evidence="1">
    <location>
        <position position="114"/>
    </location>
</feature>
<feature type="modified residue" description="Phosphotyrosine; by host" evidence="1">
    <location>
        <position position="127"/>
    </location>
</feature>
<feature type="mutagenesis site" description="Complete loss of STAT activation." evidence="4">
    <original>Y</original>
    <variation>F</variation>
    <location>
        <position position="114"/>
    </location>
</feature>
<feature type="mutagenesis site" description="Partial decrease of LCK binding." evidence="5">
    <original>S</original>
    <variation>R</variation>
    <location>
        <position position="150"/>
    </location>
</feature>
<feature type="mutagenesis site" description="Partial decrease of LCK binding." evidence="5">
    <original>F</original>
    <variation>C</variation>
    <location>
        <position position="151"/>
    </location>
</feature>
<feature type="mutagenesis site" description="Partial decrease of LCK binding." evidence="5">
    <original>F</original>
    <variation>H</variation>
    <location>
        <position position="151"/>
    </location>
</feature>
<feature type="mutagenesis site" description="Partial decrease of LCK binding." evidence="5">
    <original>L</original>
    <variation>M</variation>
    <location>
        <position position="152"/>
    </location>
</feature>
<feature type="turn" evidence="6">
    <location>
        <begin position="186"/>
        <end position="188"/>
    </location>
</feature>
<accession>P22575</accession>
<accession>Q778B4</accession>
<organismHost>
    <name type="scientific">Saimiri sciureus</name>
    <name type="common">Common squirrel monkey</name>
    <dbReference type="NCBI Taxonomy" id="9521"/>
</organismHost>
<proteinExistence type="evidence at protein level"/>
<protein>
    <recommendedName>
        <fullName>Tyrosine-protein kinase-interacting protein</fullName>
        <shortName>Tip</shortName>
    </recommendedName>
</protein>
<evidence type="ECO:0000250" key="1"/>
<evidence type="ECO:0000255" key="2"/>
<evidence type="ECO:0000256" key="3">
    <source>
        <dbReference type="SAM" id="MobiDB-lite"/>
    </source>
</evidence>
<evidence type="ECO:0000269" key="4">
    <source>
    </source>
</evidence>
<evidence type="ECO:0000269" key="5">
    <source>
    </source>
</evidence>
<evidence type="ECO:0007829" key="6">
    <source>
        <dbReference type="PDB" id="1WA7"/>
    </source>
</evidence>
<sequence>MANEGEEIELTEFPETEKERKDEEKLSSCSEETTNTSSSSGSDHVPVPIEVNVIIQNSSRTEDELQNSKEIELTGFQGKLSSCSEETTAPSSSYSSKQASVFIEENGDNETSTYRPQNVLTNLNSLYTTFEDARAQGKGMVRHKSEDLQSFLEKYPPDFRKPKRDLSATWDPGMPTPPLPPRPANLGERQASTVRLHVKESNCKQPRERKANERNIVKDLKRLENKINVIICLVVVILAVLLLVTVLSILHIGMKS</sequence>
<keyword id="KW-0002">3D-structure</keyword>
<keyword id="KW-1032">Host cell membrane</keyword>
<keyword id="KW-1043">Host membrane</keyword>
<keyword id="KW-0945">Host-virus interaction</keyword>
<keyword id="KW-0472">Membrane</keyword>
<keyword id="KW-0553">Oncogene</keyword>
<keyword id="KW-0597">Phosphoprotein</keyword>
<keyword id="KW-0729">SH3-binding</keyword>
<keyword id="KW-0812">Transmembrane</keyword>
<keyword id="KW-1133">Transmembrane helix</keyword>
<reference key="1">
    <citation type="journal article" date="2003" name="Virology">
        <title>The genome of herpesvirus saimiri C488 which is capable of transforming human T cells.</title>
        <authorList>
            <person name="Ensser A."/>
            <person name="Thurau M."/>
            <person name="Wittmann S."/>
            <person name="Fickenscher H."/>
        </authorList>
    </citation>
    <scope>NUCLEOTIDE SEQUENCE [LARGE SCALE GENOMIC DNA]</scope>
</reference>
<reference key="2">
    <citation type="journal article" date="1990" name="Virology">
        <title>The divergence between two oncogenic Herpesvirus saimiri strains in a genomic region related to the transforming phenotype.</title>
        <authorList>
            <person name="Biesinger B."/>
            <person name="Trimble J.J."/>
            <person name="Desrosiers R.C."/>
            <person name="Fleckenstein B."/>
        </authorList>
    </citation>
    <scope>NUCLEOTIDE SEQUENCE [GENOMIC DNA]</scope>
</reference>
<reference key="3">
    <citation type="journal article" date="1995" name="J. Biol. Chem.">
        <title>The product of the Herpesvirus saimiri open reading frame 1 (tip) interacts with T cell-specific kinase p56lck in transformed cells.</title>
        <authorList>
            <person name="Biesinger B."/>
            <person name="Tsygankov A.Y."/>
            <person name="Fickenscher H."/>
            <person name="Emmrich F."/>
            <person name="Fleckenstein B."/>
            <person name="Bolen J.B."/>
            <person name="Broker B.M."/>
        </authorList>
    </citation>
    <scope>INTERACTION WITH HOST LCK</scope>
</reference>
<reference key="4">
    <citation type="journal article" date="1995" name="J. Biol. Chem.">
        <title>Identification of Lck-binding elements in tip of herpesvirus saimiri.</title>
        <authorList>
            <person name="Jung J.U."/>
            <person name="Lang S.M."/>
            <person name="Friedrich U."/>
            <person name="Jun T."/>
            <person name="Roberts T.M."/>
            <person name="Desrosiers R.C."/>
            <person name="Biesinger B."/>
        </authorList>
    </citation>
    <scope>INTERACTION WITH HOST LCK</scope>
    <scope>MUTAGENESIS OF SER-150; PHE-151 AND LEU-152</scope>
</reference>
<reference key="5">
    <citation type="journal article" date="1997" name="Immunity">
        <title>Tap: a novel cellular protein that interacts with tip of herpesvirus saimiri and induces lymphocyte aggregation.</title>
        <authorList>
            <person name="Yoon D.-W."/>
            <person name="Lee H."/>
            <person name="Seol W."/>
            <person name="DeMaria M."/>
            <person name="Rosenzweig M."/>
            <person name="Jung J.U."/>
        </authorList>
    </citation>
    <scope>INTERACTION WITH HOST NXF1/TAP</scope>
</reference>
<reference key="6">
    <citation type="journal article" date="2002" name="Virology">
        <title>The herpesvirus saimiri tip484 and tip488 proteins both stimulate lck tyrosine protein kinase activity in vivo and in vitro.</title>
        <authorList>
            <person name="Kjellen P."/>
            <person name="Amdjadi K."/>
            <person name="Lund T.C."/>
            <person name="Medveczky P.G."/>
            <person name="Sefton B.M."/>
        </authorList>
    </citation>
    <scope>MUTAGENESIS OF TYR-114</scope>
</reference>
<reference key="7">
    <citation type="journal article" date="2002" name="Immunity">
        <title>Herpesviral protein targets a cellular WD repeat endosomal protein to downregulate T lymphocyte receptor expression.</title>
        <authorList>
            <person name="Park J."/>
            <person name="Lee B.-S."/>
            <person name="Choi J.-K."/>
            <person name="Means R.E."/>
            <person name="Choe J."/>
            <person name="Jung J.U."/>
        </authorList>
    </citation>
    <scope>INTERACTION WITH HOST WDR48</scope>
</reference>
<reference key="8">
    <citation type="journal article" date="2005" name="J. Cell. Physiol.">
        <title>Cell transformation by Herpesvirus saimiri.</title>
        <authorList>
            <person name="Tsygankov A.Y."/>
        </authorList>
    </citation>
    <scope>REVIEW</scope>
</reference>
<name>TIP_SHV2C</name>
<organism>
    <name type="scientific">Saimiriine herpesvirus 2 (strain 488)</name>
    <name type="common">SaHV-2</name>
    <name type="synonym">Herpesvirus saimiri</name>
    <dbReference type="NCBI Taxonomy" id="10384"/>
    <lineage>
        <taxon>Viruses</taxon>
        <taxon>Duplodnaviria</taxon>
        <taxon>Heunggongvirae</taxon>
        <taxon>Peploviricota</taxon>
        <taxon>Herviviricetes</taxon>
        <taxon>Herpesvirales</taxon>
        <taxon>Orthoherpesviridae</taxon>
        <taxon>Gammaherpesvirinae</taxon>
        <taxon>Rhadinovirus</taxon>
        <taxon>Rhadinovirus saimiriinegamma2</taxon>
        <taxon>Saimiriine herpesvirus 2</taxon>
    </lineage>
</organism>
<dbReference type="EMBL" id="AJ410493">
    <property type="protein sequence ID" value="CAC84294.1"/>
    <property type="molecule type" value="Genomic_DNA"/>
</dbReference>
<dbReference type="EMBL" id="M55264">
    <property type="protein sequence ID" value="AAA72928.1"/>
    <property type="molecule type" value="Genomic_DNA"/>
</dbReference>
<dbReference type="PDB" id="1WA7">
    <property type="method" value="NMR"/>
    <property type="chains" value="B=170-191"/>
</dbReference>
<dbReference type="PDBsum" id="1WA7"/>
<dbReference type="BMRB" id="P22575"/>
<dbReference type="SMR" id="P22575"/>
<dbReference type="IntAct" id="P22575">
    <property type="interactions" value="4"/>
</dbReference>
<dbReference type="MINT" id="P22575"/>
<dbReference type="Proteomes" id="UP000168086">
    <property type="component" value="Genome"/>
</dbReference>
<dbReference type="GO" id="GO:0020002">
    <property type="term" value="C:host cell plasma membrane"/>
    <property type="evidence" value="ECO:0007669"/>
    <property type="project" value="UniProtKB-SubCell"/>
</dbReference>
<dbReference type="GO" id="GO:0016020">
    <property type="term" value="C:membrane"/>
    <property type="evidence" value="ECO:0007669"/>
    <property type="project" value="UniProtKB-KW"/>
</dbReference>
<dbReference type="GO" id="GO:0017124">
    <property type="term" value="F:SH3 domain binding"/>
    <property type="evidence" value="ECO:0007669"/>
    <property type="project" value="UniProtKB-KW"/>
</dbReference>
<dbReference type="IDEAL" id="IID90036"/>